<accession>P0DOX5</accession>
<comment type="function">
    <text evidence="5 6 8 9 10">Immunoglobulins, also known as antibodies, are membrane-bound or secreted glycoproteins produced by B lymphocytes. In the recognition phase of humoral immunity, the membrane-bound immunoglobulins serve as receptors which, upon binding of a specific antigen, trigger the clonal expansion and differentiation of B lymphocytes into immunoglobulins-secreting plasma cells. Secreted immunoglobulins mediate the effector phase of humoral immunity, which results in the elimination of bound antigens (PubMed:20176268, PubMed:22158414, PubMed:24626930, PubMed:29449492). The antigen binding site is formed by the variable domain of one heavy chain, together with that of its associated light chain. Thus, each immunoglobulin has two antigen binding sites with remarkable affinity for a particular antigen. The variable domains are assembled by a process called V-(D)-J rearrangement and can then be subjected to somatic hypermutations which, after exposure to antigen and selection, allow affinity maturation for a particular antigen (PubMed:17576170, PubMed:20176268).</text>
</comment>
<comment type="subunit">
    <text evidence="9">Immunoglobulins are composed of two identical heavy chains and two identical light chains; disulfide-linked.</text>
</comment>
<comment type="subcellular location">
    <subcellularLocation>
        <location evidence="9 10">Secreted</location>
    </subcellularLocation>
    <subcellularLocation>
        <location evidence="9 10">Cell membrane</location>
    </subcellularLocation>
</comment>
<comment type="caution">
    <text evidence="11">This sequence is an example of a full-length immunoglobulin gamma-1 heavy chain.</text>
</comment>
<reference key="1">
    <citation type="journal article" date="1976" name="Hoppe-Seyler's Z. Physiol. Chem.">
        <title>The rule of antibody structure. The primary structure of a monoclonal IgG1 immunoglobulin (myeloma protein Nie). III. The chymotryptic peptides of the H-chain, alignment of the tryptic peptides and discussion of the complete structure.</title>
        <authorList>
            <person name="Ponstingl H."/>
            <person name="Hilschmann N."/>
        </authorList>
    </citation>
    <scope>PROTEIN SEQUENCE</scope>
    <scope>PYROGLUTAMATE FORMATION AT GLN-1</scope>
</reference>
<reference key="2">
    <citation type="journal article" date="1976" name="Hoppe-Seyler's Z. Physiol. Chem.">
        <title>Rule of antibody structure. The primary structure of a monoclonal IgG1 immunoglobulin (myeloma protein Nie), I: purification and characterization of the protein, the L- and H-chains, the cyanogen bromide cleavage products, and the disulfide bridges.</title>
        <authorList>
            <person name="Dreker L."/>
            <person name="Schwarz J."/>
            <person name="Reichel W."/>
            <person name="Hilschmann N."/>
        </authorList>
    </citation>
    <scope>DISULFIDE BOND</scope>
</reference>
<reference key="3">
    <citation type="journal article" date="2007" name="Annu. Rev. Genet.">
        <title>Immunoglobulin somatic hypermutation.</title>
        <authorList>
            <person name="Teng G."/>
            <person name="Papavasiliou F.N."/>
        </authorList>
    </citation>
    <scope>REVIEW ON SOMATIC HYPERMUTATION</scope>
</reference>
<reference key="4">
    <citation type="journal article" date="2009" name="Anal. Chem.">
        <title>Site-specific glycoprofiling of N-linked glycopeptides using MALDI-TOF MS: strong correlation between signal strength and glycoform quantities.</title>
        <authorList>
            <person name="Thaysen-Andersen M."/>
            <person name="Mysling S."/>
            <person name="Hojrup P."/>
        </authorList>
    </citation>
    <scope>GLYCOSYLATION AT ASN-299</scope>
</reference>
<reference key="5">
    <citation type="journal article" date="2010" name="J. Allergy Clin. Immunol.">
        <title>Structure and function of immunoglobulins.</title>
        <authorList>
            <person name="Schroeder H.W. Jr."/>
            <person name="Cavacini L."/>
        </authorList>
    </citation>
    <scope>REVIEW ON IMMUNOGLOBULINS</scope>
</reference>
<reference key="6">
    <citation type="journal article" date="2012" name="Nat. Rev. Immunol.">
        <title>Molecular programming of B cell memory.</title>
        <authorList>
            <person name="McHeyzer-Williams M."/>
            <person name="Okitsu S."/>
            <person name="Wang N."/>
            <person name="McHeyzer-Williams L."/>
        </authorList>
    </citation>
    <scope>REVIEW ON FUNCTION</scope>
</reference>
<reference key="7">
    <citation type="journal article" date="2014" name="Science">
        <title>Complement is activated by IgG hexamers assembled at the cell surface.</title>
        <authorList>
            <person name="Diebolder C.A."/>
            <person name="Beurskens F.J."/>
            <person name="de Jong R.N."/>
            <person name="Koning R.I."/>
            <person name="Strumane K."/>
            <person name="Lindorfer M.A."/>
            <person name="Voorhorst M."/>
            <person name="Ugurlar D."/>
            <person name="Rosati S."/>
            <person name="Heck A.J."/>
            <person name="van de Winkel J.G."/>
            <person name="Wilson I.A."/>
            <person name="Koster A.J."/>
            <person name="Taylor R.P."/>
            <person name="Saphire E.O."/>
            <person name="Burton D.R."/>
            <person name="Schuurman J."/>
            <person name="Gros P."/>
            <person name="Parren P.W."/>
        </authorList>
    </citation>
    <scope>FUNCTION</scope>
    <scope>MUTAGENESIS OF ILE-255; HIS-435; ASN-436 AND HIS-437</scope>
</reference>
<reference evidence="13" key="8">
    <citation type="journal article" date="2018" name="Science">
        <title>Structures of C1-IgG1 provide insights into how danger pattern recognition activates complement.</title>
        <authorList>
            <person name="Ugurlar D."/>
            <person name="Howes S.C."/>
            <person name="de Kreuk B.J."/>
            <person name="Koning R.I."/>
            <person name="de Jong R.N."/>
            <person name="Beurskens F.J."/>
            <person name="Schuurman J."/>
            <person name="Koster A.J."/>
            <person name="Sharp T.H."/>
            <person name="Parren P.W.H.I."/>
            <person name="Gros P."/>
        </authorList>
    </citation>
    <scope>STRUCTURE BY ELECTRON MICROSCOPY (10.00 ANGSTROMS) OF 234-449 IN COMPLEX WITH C1QA; C1QB AND C1QC</scope>
    <scope>FUNCTION</scope>
    <scope>GLYCOSYLATION AT ASN-299</scope>
    <scope>MUTAGENESIS OF TYR-302; LYS-324; ALA-329; PRO-331 AND PRO-333</scope>
</reference>
<evidence type="ECO:0000255" key="1"/>
<evidence type="ECO:0000255" key="2">
    <source>
        <dbReference type="PROSITE-ProRule" id="PRU00114"/>
    </source>
</evidence>
<evidence type="ECO:0000269" key="3">
    <source>
    </source>
</evidence>
<evidence type="ECO:0000269" key="4">
    <source>
    </source>
</evidence>
<evidence type="ECO:0000269" key="5">
    <source>
    </source>
</evidence>
<evidence type="ECO:0000269" key="6">
    <source>
    </source>
</evidence>
<evidence type="ECO:0000269" key="7">
    <source>
    </source>
</evidence>
<evidence type="ECO:0000303" key="8">
    <source>
    </source>
</evidence>
<evidence type="ECO:0000303" key="9">
    <source>
    </source>
</evidence>
<evidence type="ECO:0000303" key="10">
    <source>
    </source>
</evidence>
<evidence type="ECO:0000305" key="11"/>
<evidence type="ECO:0000305" key="12">
    <source>
    </source>
</evidence>
<evidence type="ECO:0007744" key="13">
    <source>
        <dbReference type="PDB" id="6FCZ"/>
    </source>
</evidence>
<evidence type="ECO:0007829" key="14">
    <source>
        <dbReference type="PDB" id="5O4E"/>
    </source>
</evidence>
<evidence type="ECO:0007829" key="15">
    <source>
        <dbReference type="PDB" id="5W5L"/>
    </source>
</evidence>
<evidence type="ECO:0007829" key="16">
    <source>
        <dbReference type="PDB" id="6ARP"/>
    </source>
</evidence>
<evidence type="ECO:0007829" key="17">
    <source>
        <dbReference type="PDB" id="6G1E"/>
    </source>
</evidence>
<evidence type="ECO:0007829" key="18">
    <source>
        <dbReference type="PDB" id="6N35"/>
    </source>
</evidence>
<evidence type="ECO:0007829" key="19">
    <source>
        <dbReference type="PDB" id="6UGW"/>
    </source>
</evidence>
<evidence type="ECO:0007829" key="20">
    <source>
        <dbReference type="PDB" id="6UOE"/>
    </source>
</evidence>
<evidence type="ECO:0007829" key="21">
    <source>
        <dbReference type="PDB" id="6V8Z"/>
    </source>
</evidence>
<evidence type="ECO:0007829" key="22">
    <source>
        <dbReference type="PDB" id="7CZV"/>
    </source>
</evidence>
<evidence type="ECO:0007829" key="23">
    <source>
        <dbReference type="PDB" id="8A49"/>
    </source>
</evidence>
<protein>
    <recommendedName>
        <fullName evidence="11">Immunoglobulin gamma-1 heavy chain</fullName>
    </recommendedName>
    <alternativeName>
        <fullName evidence="12">Immunoglobulin gamma-1 heavy chain NIE</fullName>
    </alternativeName>
</protein>
<name>IGG1_HUMAN</name>
<sequence>QVQLVQSGGGVVQPGRSLRLSCAASGFTFSRYTIHWVRQAPGKGLEWVAVMSYNGNNKHYADSVNGRFTISRNDSKNTLYLNMNSLRPEDTAVYYCARIRDTAMFFAHWGQGTLVTVSSASTKGPSVFPLAPSSKSTSGGTAALGCLVKDYFPEPVTVSWNSGALTSGVHTFPAVLQSSGLYSLSSVVTVPSSSLGTQTYICNVNHKPSNTKVDKKVEPKSCDKTHTCPPCPAPELLGGPSVFLFPPKPKDTLMISRTPEVTCVVVDVSHEDPEVKFNWYVDGVEVHNAKTKPREEQYNSTYRVVSVLTVLHQDWLNGKEYKCKVSNKALPAPIEKTISKAKGQPREPQVYTLPPSRDELTKNQVSLTCLVKGFYPSDIAVEWESNGQPENNYKTTPPVLDSDGSFFLYSKLTVDKSRWQQGNVFSCSVMHEALHNHYTQKSLSLSPGK</sequence>
<feature type="chain" id="PRO_0000439287" description="Immunoglobulin gamma-1 heavy chain">
    <location>
        <begin position="1"/>
        <end position="449"/>
    </location>
</feature>
<feature type="domain" description="Ig-like 1" evidence="2">
    <location>
        <begin position="1"/>
        <end position="96"/>
    </location>
</feature>
<feature type="domain" description="Ig-like 2" evidence="2">
    <location>
        <begin position="125"/>
        <end position="218"/>
    </location>
</feature>
<feature type="domain" description="Ig-like 3" evidence="2">
    <location>
        <begin position="240"/>
        <end position="339"/>
    </location>
</feature>
<feature type="domain" description="Ig-like 4" evidence="2">
    <location>
        <begin position="348"/>
        <end position="444"/>
    </location>
</feature>
<feature type="region of interest" description="Variable (V) domain, involved in antigen recognition" evidence="11">
    <location>
        <begin position="1"/>
        <end position="119"/>
    </location>
</feature>
<feature type="region of interest" description="Constant (C) domain" evidence="11">
    <location>
        <begin position="120"/>
        <end position="449"/>
    </location>
</feature>
<feature type="modified residue" description="Pyrrolidone carboxylic acid" evidence="7">
    <location>
        <position position="1"/>
    </location>
</feature>
<feature type="glycosylation site" description="N-linked (GlcNAc...) asparagine" evidence="1">
    <location>
        <position position="73"/>
    </location>
</feature>
<feature type="glycosylation site" description="N-linked (GlcNAc...) (complex) asparagine" evidence="4 6">
    <location>
        <position position="299"/>
    </location>
</feature>
<feature type="disulfide bond" evidence="3">
    <location>
        <begin position="22"/>
        <end position="96"/>
    </location>
</feature>
<feature type="disulfide bond" evidence="3">
    <location>
        <begin position="146"/>
        <end position="202"/>
    </location>
</feature>
<feature type="disulfide bond" description="Interchain (with light chain)" evidence="3">
    <location>
        <position position="222"/>
    </location>
</feature>
<feature type="disulfide bond" description="Interchain (with heavy chain)" evidence="3">
    <location>
        <position position="228"/>
    </location>
</feature>
<feature type="disulfide bond" description="Interchain (with heavy chain)" evidence="3">
    <location>
        <position position="231"/>
    </location>
</feature>
<feature type="disulfide bond" evidence="3">
    <location>
        <begin position="263"/>
        <end position="323"/>
    </location>
</feature>
<feature type="disulfide bond" evidence="3">
    <location>
        <begin position="369"/>
        <end position="427"/>
    </location>
</feature>
<feature type="mutagenesis site" description="Impaired ability to activate the classical complement pathway." evidence="5">
    <original>I</original>
    <variation>A</variation>
    <location>
        <position position="255"/>
    </location>
</feature>
<feature type="mutagenesis site" description="Enhanced ability to activate the classical complement pathway." evidence="6">
    <original>Y</original>
    <variation>D</variation>
    <variation>A</variation>
    <location>
        <position position="302"/>
    </location>
</feature>
<feature type="mutagenesis site" description="Impaired ability to activate the classical complement pathway." evidence="6">
    <original>Y</original>
    <variation>R</variation>
    <location>
        <position position="302"/>
    </location>
</feature>
<feature type="mutagenesis site" description="Impaired ability to activate the classical complement pathway." evidence="6">
    <original>K</original>
    <variation>A</variation>
    <location>
        <position position="324"/>
    </location>
</feature>
<feature type="mutagenesis site" description="Impaired ability to activate the classical complement pathway." evidence="6">
    <original>A</original>
    <variation>K</variation>
    <location>
        <position position="329"/>
    </location>
</feature>
<feature type="mutagenesis site" description="Impaired ability to activate the classical complement pathway." evidence="6">
    <original>P</original>
    <variation>A</variation>
    <location>
        <position position="331"/>
    </location>
</feature>
<feature type="mutagenesis site" description="Impaired ability to activate the classical complement pathway." evidence="6">
    <original>P</original>
    <variation>A</variation>
    <location>
        <position position="333"/>
    </location>
</feature>
<feature type="mutagenesis site" description="Impaired ability to activate the classical complement pathway." evidence="5">
    <original>H</original>
    <variation>A</variation>
    <location>
        <position position="435"/>
    </location>
</feature>
<feature type="mutagenesis site" description="Impaired ability to activate the classical complement pathway." evidence="5">
    <original>N</original>
    <variation>A</variation>
    <location>
        <position position="436"/>
    </location>
</feature>
<feature type="mutagenesis site" description="Enhanced ability to activate the classical complement pathway." evidence="5">
    <original>H</original>
    <variation>R</variation>
    <location>
        <position position="437"/>
    </location>
</feature>
<feature type="strand" evidence="16">
    <location>
        <begin position="3"/>
        <end position="6"/>
    </location>
</feature>
<feature type="strand" evidence="16">
    <location>
        <begin position="10"/>
        <end position="12"/>
    </location>
</feature>
<feature type="strand" evidence="16">
    <location>
        <begin position="18"/>
        <end position="27"/>
    </location>
</feature>
<feature type="turn" evidence="16">
    <location>
        <begin position="29"/>
        <end position="31"/>
    </location>
</feature>
<feature type="strand" evidence="16">
    <location>
        <begin position="34"/>
        <end position="39"/>
    </location>
</feature>
<feature type="turn" evidence="21">
    <location>
        <begin position="41"/>
        <end position="43"/>
    </location>
</feature>
<feature type="strand" evidence="16">
    <location>
        <begin position="45"/>
        <end position="51"/>
    </location>
</feature>
<feature type="helix" evidence="18">
    <location>
        <begin position="53"/>
        <end position="55"/>
    </location>
</feature>
<feature type="strand" evidence="16">
    <location>
        <begin position="58"/>
        <end position="60"/>
    </location>
</feature>
<feature type="helix" evidence="16">
    <location>
        <begin position="62"/>
        <end position="64"/>
    </location>
</feature>
<feature type="turn" evidence="16">
    <location>
        <begin position="65"/>
        <end position="67"/>
    </location>
</feature>
<feature type="strand" evidence="16">
    <location>
        <begin position="68"/>
        <end position="73"/>
    </location>
</feature>
<feature type="helix" evidence="16">
    <location>
        <begin position="74"/>
        <end position="76"/>
    </location>
</feature>
<feature type="strand" evidence="16">
    <location>
        <begin position="78"/>
        <end position="83"/>
    </location>
</feature>
<feature type="helix" evidence="16">
    <location>
        <begin position="88"/>
        <end position="90"/>
    </location>
</feature>
<feature type="strand" evidence="16">
    <location>
        <begin position="92"/>
        <end position="101"/>
    </location>
</feature>
<feature type="strand" evidence="22">
    <location>
        <begin position="103"/>
        <end position="105"/>
    </location>
</feature>
<feature type="strand" evidence="16">
    <location>
        <begin position="106"/>
        <end position="109"/>
    </location>
</feature>
<feature type="strand" evidence="16">
    <location>
        <begin position="113"/>
        <end position="117"/>
    </location>
</feature>
<feature type="strand" evidence="16">
    <location>
        <begin position="126"/>
        <end position="130"/>
    </location>
</feature>
<feature type="helix" evidence="20">
    <location>
        <begin position="134"/>
        <end position="136"/>
    </location>
</feature>
<feature type="strand" evidence="16">
    <location>
        <begin position="141"/>
        <end position="154"/>
    </location>
</feature>
<feature type="strand" evidence="16">
    <location>
        <begin position="157"/>
        <end position="160"/>
    </location>
</feature>
<feature type="helix" evidence="16">
    <location>
        <begin position="161"/>
        <end position="163"/>
    </location>
</feature>
<feature type="strand" evidence="16">
    <location>
        <begin position="169"/>
        <end position="171"/>
    </location>
</feature>
<feature type="strand" evidence="21">
    <location>
        <begin position="175"/>
        <end position="178"/>
    </location>
</feature>
<feature type="strand" evidence="16">
    <location>
        <begin position="182"/>
        <end position="191"/>
    </location>
</feature>
<feature type="helix" evidence="16">
    <location>
        <begin position="192"/>
        <end position="194"/>
    </location>
</feature>
<feature type="turn" evidence="16">
    <location>
        <begin position="195"/>
        <end position="197"/>
    </location>
</feature>
<feature type="strand" evidence="16">
    <location>
        <begin position="201"/>
        <end position="206"/>
    </location>
</feature>
<feature type="helix" evidence="16">
    <location>
        <begin position="207"/>
        <end position="209"/>
    </location>
</feature>
<feature type="strand" evidence="16">
    <location>
        <begin position="211"/>
        <end position="216"/>
    </location>
</feature>
<feature type="strand" evidence="17">
    <location>
        <begin position="241"/>
        <end position="245"/>
    </location>
</feature>
<feature type="helix" evidence="15">
    <location>
        <begin position="249"/>
        <end position="253"/>
    </location>
</feature>
<feature type="strand" evidence="14">
    <location>
        <begin position="255"/>
        <end position="257"/>
    </location>
</feature>
<feature type="strand" evidence="17">
    <location>
        <begin position="260"/>
        <end position="268"/>
    </location>
</feature>
<feature type="strand" evidence="17">
    <location>
        <begin position="270"/>
        <end position="272"/>
    </location>
</feature>
<feature type="strand" evidence="17">
    <location>
        <begin position="276"/>
        <end position="281"/>
    </location>
</feature>
<feature type="strand" evidence="17">
    <location>
        <begin position="284"/>
        <end position="286"/>
    </location>
</feature>
<feature type="strand" evidence="17">
    <location>
        <begin position="290"/>
        <end position="297"/>
    </location>
</feature>
<feature type="turn" evidence="17">
    <location>
        <begin position="298"/>
        <end position="300"/>
    </location>
</feature>
<feature type="strand" evidence="17">
    <location>
        <begin position="301"/>
        <end position="309"/>
    </location>
</feature>
<feature type="helix" evidence="17">
    <location>
        <begin position="312"/>
        <end position="316"/>
    </location>
</feature>
<feature type="strand" evidence="17">
    <location>
        <begin position="321"/>
        <end position="326"/>
    </location>
</feature>
<feature type="strand" evidence="17">
    <location>
        <begin position="328"/>
        <end position="332"/>
    </location>
</feature>
<feature type="strand" evidence="17">
    <location>
        <begin position="334"/>
        <end position="338"/>
    </location>
</feature>
<feature type="strand" evidence="17">
    <location>
        <begin position="349"/>
        <end position="353"/>
    </location>
</feature>
<feature type="helix" evidence="17">
    <location>
        <begin position="359"/>
        <end position="361"/>
    </location>
</feature>
<feature type="strand" evidence="17">
    <location>
        <begin position="362"/>
        <end position="377"/>
    </location>
</feature>
<feature type="strand" evidence="17">
    <location>
        <begin position="380"/>
        <end position="385"/>
    </location>
</feature>
<feature type="strand" evidence="19">
    <location>
        <begin position="388"/>
        <end position="390"/>
    </location>
</feature>
<feature type="strand" evidence="17">
    <location>
        <begin position="391"/>
        <end position="395"/>
    </location>
</feature>
<feature type="strand" evidence="23">
    <location>
        <begin position="402"/>
        <end position="404"/>
    </location>
</feature>
<feature type="strand" evidence="17">
    <location>
        <begin position="406"/>
        <end position="415"/>
    </location>
</feature>
<feature type="helix" evidence="17">
    <location>
        <begin position="416"/>
        <end position="420"/>
    </location>
</feature>
<feature type="strand" evidence="17">
    <location>
        <begin position="425"/>
        <end position="430"/>
    </location>
</feature>
<feature type="helix" evidence="17">
    <location>
        <begin position="435"/>
        <end position="437"/>
    </location>
</feature>
<feature type="strand" evidence="17">
    <location>
        <begin position="438"/>
        <end position="443"/>
    </location>
</feature>
<dbReference type="PDB" id="1N0X">
    <property type="method" value="X-ray"/>
    <property type="resolution" value="1.80 A"/>
    <property type="chains" value="H/K=1-222"/>
</dbReference>
<dbReference type="PDB" id="3PGF">
    <property type="method" value="X-ray"/>
    <property type="resolution" value="2.10 A"/>
    <property type="chains" value="H=1-227"/>
</dbReference>
<dbReference type="PDB" id="4R2G">
    <property type="method" value="X-ray"/>
    <property type="resolution" value="3.28 A"/>
    <property type="chains" value="D/J/N/Q=1-223"/>
</dbReference>
<dbReference type="PDB" id="5O4E">
    <property type="method" value="X-ray"/>
    <property type="resolution" value="2.15 A"/>
    <property type="chains" value="A=227-449, C=227-448"/>
</dbReference>
<dbReference type="PDB" id="5VJ6">
    <property type="method" value="EM"/>
    <property type="resolution" value="11.50 A"/>
    <property type="chains" value="H=3-224"/>
</dbReference>
<dbReference type="PDB" id="5VU0">
    <property type="method" value="X-ray"/>
    <property type="resolution" value="2.26 A"/>
    <property type="chains" value="A/B=230-446"/>
</dbReference>
<dbReference type="PDB" id="5VZX">
    <property type="method" value="X-ray"/>
    <property type="resolution" value="2.50 A"/>
    <property type="chains" value="E/H=1-227"/>
</dbReference>
<dbReference type="PDB" id="5VZY">
    <property type="method" value="X-ray"/>
    <property type="resolution" value="2.32 A"/>
    <property type="chains" value="H=1-227"/>
</dbReference>
<dbReference type="PDB" id="5W5L">
    <property type="method" value="X-ray"/>
    <property type="resolution" value="1.90 A"/>
    <property type="chains" value="A/B=227-449"/>
</dbReference>
<dbReference type="PDB" id="5WAV">
    <property type="method" value="X-ray"/>
    <property type="resolution" value="2.60 A"/>
    <property type="chains" value="A/B=228-448"/>
</dbReference>
<dbReference type="PDB" id="5XJE">
    <property type="method" value="X-ray"/>
    <property type="resolution" value="2.40 A"/>
    <property type="chains" value="A/B=227-449"/>
</dbReference>
<dbReference type="PDB" id="5XJF">
    <property type="method" value="X-ray"/>
    <property type="resolution" value="2.50 A"/>
    <property type="chains" value="A/B=227-449"/>
</dbReference>
<dbReference type="PDB" id="5XMH">
    <property type="method" value="X-ray"/>
    <property type="resolution" value="2.80 A"/>
    <property type="chains" value="A/B=239-446"/>
</dbReference>
<dbReference type="PDB" id="5Y56">
    <property type="method" value="X-ray"/>
    <property type="resolution" value="2.65 A"/>
    <property type="chains" value="A/B=238-445"/>
</dbReference>
<dbReference type="PDB" id="5YC5">
    <property type="method" value="X-ray"/>
    <property type="resolution" value="2.71 A"/>
    <property type="chains" value="A/B=226-448"/>
</dbReference>
<dbReference type="PDB" id="6APD">
    <property type="method" value="X-ray"/>
    <property type="resolution" value="4.10 A"/>
    <property type="chains" value="J/K/N=109-223"/>
</dbReference>
<dbReference type="PDB" id="6ARP">
    <property type="method" value="X-ray"/>
    <property type="resolution" value="1.70 A"/>
    <property type="chains" value="B/D=1-222"/>
</dbReference>
<dbReference type="PDB" id="6ARU">
    <property type="method" value="X-ray"/>
    <property type="resolution" value="3.20 A"/>
    <property type="chains" value="C=1-222"/>
</dbReference>
<dbReference type="PDB" id="6B70">
    <property type="method" value="EM"/>
    <property type="resolution" value="3.70 A"/>
    <property type="chains" value="C/E=1-219"/>
</dbReference>
<dbReference type="PDB" id="6B7Z">
    <property type="method" value="EM"/>
    <property type="resolution" value="6.50 A"/>
    <property type="chains" value="C/E=1-219"/>
</dbReference>
<dbReference type="PDB" id="6BF7">
    <property type="method" value="EM"/>
    <property type="resolution" value="6.50 A"/>
    <property type="chains" value="C/E=1-219"/>
</dbReference>
<dbReference type="PDB" id="6BF9">
    <property type="method" value="EM"/>
    <property type="resolution" value="7.20 A"/>
    <property type="chains" value="C/E=1-219"/>
</dbReference>
<dbReference type="PDB" id="6BFT">
    <property type="method" value="X-ray"/>
    <property type="resolution" value="2.55 A"/>
    <property type="chains" value="A/H=1-227"/>
</dbReference>
<dbReference type="PDB" id="6BGT">
    <property type="method" value="X-ray"/>
    <property type="resolution" value="2.70 A"/>
    <property type="chains" value="B=1-222"/>
</dbReference>
<dbReference type="PDB" id="6BKB">
    <property type="method" value="X-ray"/>
    <property type="resolution" value="2.80 A"/>
    <property type="chains" value="H=2-222"/>
</dbReference>
<dbReference type="PDB" id="6BKC">
    <property type="method" value="X-ray"/>
    <property type="resolution" value="2.60 A"/>
    <property type="chains" value="H=4-222"/>
</dbReference>
<dbReference type="PDB" id="6BZ4">
    <property type="method" value="X-ray"/>
    <property type="resolution" value="2.40 A"/>
    <property type="chains" value="A/B=239-446"/>
</dbReference>
<dbReference type="PDB" id="6DKJ">
    <property type="method" value="X-ray"/>
    <property type="resolution" value="1.95 A"/>
    <property type="chains" value="A/H=1-222"/>
</dbReference>
<dbReference type="PDB" id="6EAQ">
    <property type="method" value="X-ray"/>
    <property type="resolution" value="2.22 A"/>
    <property type="chains" value="A/B=227-446"/>
</dbReference>
<dbReference type="PDB" id="6FCZ">
    <property type="method" value="EM"/>
    <property type="resolution" value="10.00 A"/>
    <property type="chains" value="H/K=234-449"/>
</dbReference>
<dbReference type="PDB" id="6FGO">
    <property type="method" value="X-ray"/>
    <property type="resolution" value="2.50 A"/>
    <property type="chains" value="A/B/C/D=239-448"/>
</dbReference>
<dbReference type="PDB" id="6G1E">
    <property type="method" value="X-ray"/>
    <property type="resolution" value="1.88 A"/>
    <property type="chains" value="B=223-449"/>
</dbReference>
<dbReference type="PDB" id="6IFJ">
    <property type="method" value="X-ray"/>
    <property type="resolution" value="2.40 A"/>
    <property type="chains" value="A/B=218-449"/>
</dbReference>
<dbReference type="PDB" id="6IQG">
    <property type="method" value="X-ray"/>
    <property type="resolution" value="3.00 A"/>
    <property type="chains" value="A/B=238-447"/>
</dbReference>
<dbReference type="PDB" id="6IQH">
    <property type="method" value="X-ray"/>
    <property type="resolution" value="3.00 A"/>
    <property type="chains" value="A/B=238-447"/>
</dbReference>
<dbReference type="PDB" id="6KA7">
    <property type="method" value="X-ray"/>
    <property type="resolution" value="3.00 A"/>
    <property type="chains" value="C/D=240-447"/>
</dbReference>
<dbReference type="PDB" id="6MB3">
    <property type="method" value="EM"/>
    <property type="resolution" value="3.37 A"/>
    <property type="chains" value="A/B/C/D/F/G/H/I/J=1-223"/>
</dbReference>
<dbReference type="PDB" id="6MSY">
    <property type="method" value="X-ray"/>
    <property type="resolution" value="2.00 A"/>
    <property type="chains" value="H=1-221"/>
</dbReference>
<dbReference type="PDB" id="6MU3">
    <property type="method" value="X-ray"/>
    <property type="resolution" value="2.33 A"/>
    <property type="chains" value="H/M=1-221"/>
</dbReference>
<dbReference type="PDB" id="6MUB">
    <property type="method" value="X-ray"/>
    <property type="resolution" value="2.50 A"/>
    <property type="chains" value="H/M=1-222"/>
</dbReference>
<dbReference type="PDB" id="6N2X">
    <property type="method" value="X-ray"/>
    <property type="resolution" value="3.00 A"/>
    <property type="chains" value="H/M=1-220"/>
</dbReference>
<dbReference type="PDB" id="6N32">
    <property type="method" value="X-ray"/>
    <property type="resolution" value="2.20 A"/>
    <property type="chains" value="H/K=1-221"/>
</dbReference>
<dbReference type="PDB" id="6N35">
    <property type="method" value="X-ray"/>
    <property type="resolution" value="1.75 A"/>
    <property type="chains" value="H/M=1-220"/>
</dbReference>
<dbReference type="PDB" id="6OGE">
    <property type="method" value="EM"/>
    <property type="resolution" value="4.36 A"/>
    <property type="chains" value="C=1-222"/>
</dbReference>
<dbReference type="PDB" id="6OKQ">
    <property type="method" value="X-ray"/>
    <property type="resolution" value="3.20 A"/>
    <property type="chains" value="A/D/F=1-226"/>
</dbReference>
<dbReference type="PDB" id="6P6D">
    <property type="method" value="X-ray"/>
    <property type="resolution" value="2.31 A"/>
    <property type="chains" value="A/B=223-449"/>
</dbReference>
<dbReference type="PDB" id="6UBI">
    <property type="method" value="X-ray"/>
    <property type="resolution" value="1.90 A"/>
    <property type="chains" value="A/D=4-226"/>
</dbReference>
<dbReference type="PDB" id="6UGW">
    <property type="method" value="X-ray"/>
    <property type="resolution" value="2.00 A"/>
    <property type="chains" value="A=211-449"/>
</dbReference>
<dbReference type="PDB" id="6UGX">
    <property type="method" value="X-ray"/>
    <property type="resolution" value="2.10 A"/>
    <property type="chains" value="A/B=211-449"/>
</dbReference>
<dbReference type="PDB" id="6UGY">
    <property type="method" value="X-ray"/>
    <property type="resolution" value="2.10 A"/>
    <property type="chains" value="A=211-449"/>
</dbReference>
<dbReference type="PDB" id="6UOE">
    <property type="method" value="X-ray"/>
    <property type="resolution" value="1.80 A"/>
    <property type="chains" value="H=1-223"/>
</dbReference>
<dbReference type="PDB" id="6V8Z">
    <property type="method" value="EM"/>
    <property type="resolution" value="2.90 A"/>
    <property type="chains" value="C/I/O=1-220"/>
</dbReference>
<dbReference type="PDB" id="6VSL">
    <property type="method" value="X-ray"/>
    <property type="resolution" value="2.10 A"/>
    <property type="chains" value="A/B=236-446"/>
</dbReference>
<dbReference type="PDB" id="6VSZ">
    <property type="method" value="X-ray"/>
    <property type="resolution" value="2.60 A"/>
    <property type="chains" value="A/B=236-446"/>
</dbReference>
<dbReference type="PDB" id="6X3I">
    <property type="method" value="X-ray"/>
    <property type="resolution" value="2.27 A"/>
    <property type="chains" value="A=227-449"/>
</dbReference>
<dbReference type="PDB" id="6YSC">
    <property type="method" value="X-ray"/>
    <property type="resolution" value="2.05 A"/>
    <property type="chains" value="A/B=223-449"/>
</dbReference>
<dbReference type="PDB" id="6YT7">
    <property type="method" value="X-ray"/>
    <property type="resolution" value="1.55 A"/>
    <property type="chains" value="A=223-449"/>
</dbReference>
<dbReference type="PDB" id="6YTB">
    <property type="method" value="X-ray"/>
    <property type="resolution" value="1.65 A"/>
    <property type="chains" value="A/B=223-449"/>
</dbReference>
<dbReference type="PDB" id="7CZT">
    <property type="method" value="EM"/>
    <property type="resolution" value="2.70 A"/>
    <property type="chains" value="H/I=99-449"/>
</dbReference>
<dbReference type="PDB" id="7CZU">
    <property type="method" value="EM"/>
    <property type="resolution" value="3.40 A"/>
    <property type="chains" value="H/J=1-5, H/J=99-449"/>
</dbReference>
<dbReference type="PDB" id="7CZV">
    <property type="method" value="EM"/>
    <property type="resolution" value="3.30 A"/>
    <property type="chains" value="H/I/J=1-5, H/I/J=99-449"/>
</dbReference>
<dbReference type="PDB" id="7T17">
    <property type="method" value="EM"/>
    <property type="resolution" value="5.26 A"/>
    <property type="chains" value="H=120-224"/>
</dbReference>
<dbReference type="PDB" id="7URU">
    <property type="method" value="X-ray"/>
    <property type="resolution" value="2.40 A"/>
    <property type="chains" value="A/B=227-449"/>
</dbReference>
<dbReference type="PDB" id="7X13">
    <property type="method" value="EM"/>
    <property type="resolution" value="3.70 A"/>
    <property type="chains" value="A/B/C/D/E/F/G/H/I/J/K/L=223-443"/>
</dbReference>
<dbReference type="PDB" id="7XXL">
    <property type="method" value="EM"/>
    <property type="resolution" value="7.30 A"/>
    <property type="chains" value="A=1-226"/>
</dbReference>
<dbReference type="PDB" id="8A49">
    <property type="method" value="X-ray"/>
    <property type="resolution" value="3.45 A"/>
    <property type="chains" value="A/B=223-449"/>
</dbReference>
<dbReference type="PDB" id="8A64">
    <property type="method" value="EM"/>
    <property type="resolution" value="4.60 A"/>
    <property type="chains" value="B/C=1-449"/>
</dbReference>
<dbReference type="PDB" id="8DAO">
    <property type="method" value="X-ray"/>
    <property type="resolution" value="2.80 A"/>
    <property type="chains" value="E/G=120-222"/>
</dbReference>
<dbReference type="PDB" id="8DBZ">
    <property type="method" value="EM"/>
    <property type="resolution" value="4.10 A"/>
    <property type="chains" value="F/H=120-222"/>
</dbReference>
<dbReference type="PDB" id="8DV1">
    <property type="method" value="EM"/>
    <property type="resolution" value="3.40 A"/>
    <property type="chains" value="D=218-449"/>
</dbReference>
<dbReference type="PDB" id="8DV2">
    <property type="method" value="EM"/>
    <property type="resolution" value="3.50 A"/>
    <property type="chains" value="D=218-449"/>
</dbReference>
<dbReference type="PDB" id="8ECQ">
    <property type="method" value="X-ray"/>
    <property type="resolution" value="2.00 A"/>
    <property type="chains" value="H=1-222"/>
</dbReference>
<dbReference type="PDB" id="8ECV">
    <property type="method" value="X-ray"/>
    <property type="resolution" value="1.81 A"/>
    <property type="chains" value="B/H=1-222"/>
</dbReference>
<dbReference type="PDB" id="8ECZ">
    <property type="method" value="X-ray"/>
    <property type="resolution" value="2.82 A"/>
    <property type="chains" value="B/H=1-222"/>
</dbReference>
<dbReference type="PDB" id="8ED1">
    <property type="method" value="X-ray"/>
    <property type="resolution" value="2.31 A"/>
    <property type="chains" value="H=1-222"/>
</dbReference>
<dbReference type="PDB" id="8EDF">
    <property type="method" value="X-ray"/>
    <property type="resolution" value="3.40 A"/>
    <property type="chains" value="H=1-222"/>
</dbReference>
<dbReference type="PDB" id="8G8D">
    <property type="method" value="X-ray"/>
    <property type="resolution" value="2.02 A"/>
    <property type="chains" value="A/H=1-222"/>
</dbReference>
<dbReference type="PDB" id="8GHR">
    <property type="method" value="EM"/>
    <property type="resolution" value="3.20 A"/>
    <property type="chains" value="A/B=218-449"/>
</dbReference>
<dbReference type="PDB" id="8Q5U">
    <property type="method" value="X-ray"/>
    <property type="resolution" value="3.00 A"/>
    <property type="chains" value="A/B/C=223-449"/>
</dbReference>
<dbReference type="PDB" id="8SVE">
    <property type="method" value="X-ray"/>
    <property type="resolution" value="2.40 A"/>
    <property type="chains" value="H/I=1-226"/>
</dbReference>
<dbReference type="PDB" id="8TQK">
    <property type="method" value="EM"/>
    <property type="resolution" value="3.20 A"/>
    <property type="chains" value="D/F/H=1-222"/>
</dbReference>
<dbReference type="PDB" id="8TTM">
    <property type="method" value="X-ray"/>
    <property type="resolution" value="2.51 A"/>
    <property type="chains" value="A/B=218-449"/>
</dbReference>
<dbReference type="PDB" id="8TUD">
    <property type="method" value="X-ray"/>
    <property type="resolution" value="3.00 A"/>
    <property type="chains" value="A/B=218-449"/>
</dbReference>
<dbReference type="PDB" id="8URO">
    <property type="method" value="X-ray"/>
    <property type="resolution" value="3.62 A"/>
    <property type="chains" value="B/C/E/F=218-449"/>
</dbReference>
<dbReference type="PDB" id="8W4L">
    <property type="method" value="X-ray"/>
    <property type="resolution" value="3.10 A"/>
    <property type="chains" value="A/B=227-449"/>
</dbReference>
<dbReference type="PDB" id="8W4M">
    <property type="method" value="X-ray"/>
    <property type="resolution" value="2.18 A"/>
    <property type="chains" value="A=227-449"/>
</dbReference>
<dbReference type="PDB" id="8ZCK">
    <property type="method" value="X-ray"/>
    <property type="resolution" value="2.00 A"/>
    <property type="chains" value="A/B=239-446"/>
</dbReference>
<dbReference type="PDB" id="8ZCL">
    <property type="method" value="X-ray"/>
    <property type="resolution" value="2.60 A"/>
    <property type="chains" value="A/B=239-446"/>
</dbReference>
<dbReference type="PDB" id="8ZCM">
    <property type="method" value="X-ray"/>
    <property type="resolution" value="2.64 A"/>
    <property type="chains" value="A/B=239-446"/>
</dbReference>
<dbReference type="PDB" id="9IIE">
    <property type="method" value="X-ray"/>
    <property type="resolution" value="3.14 A"/>
    <property type="chains" value="A/B=239-446"/>
</dbReference>
<dbReference type="PDBsum" id="1N0X"/>
<dbReference type="PDBsum" id="3PGF"/>
<dbReference type="PDBsum" id="4R2G"/>
<dbReference type="PDBsum" id="5O4E"/>
<dbReference type="PDBsum" id="5VJ6"/>
<dbReference type="PDBsum" id="5VU0"/>
<dbReference type="PDBsum" id="5VZX"/>
<dbReference type="PDBsum" id="5VZY"/>
<dbReference type="PDBsum" id="5W5L"/>
<dbReference type="PDBsum" id="5WAV"/>
<dbReference type="PDBsum" id="5XJE"/>
<dbReference type="PDBsum" id="5XJF"/>
<dbReference type="PDBsum" id="5XMH"/>
<dbReference type="PDBsum" id="5Y56"/>
<dbReference type="PDBsum" id="5YC5"/>
<dbReference type="PDBsum" id="6APD"/>
<dbReference type="PDBsum" id="6ARP"/>
<dbReference type="PDBsum" id="6ARU"/>
<dbReference type="PDBsum" id="6B70"/>
<dbReference type="PDBsum" id="6B7Z"/>
<dbReference type="PDBsum" id="6BF7"/>
<dbReference type="PDBsum" id="6BF9"/>
<dbReference type="PDBsum" id="6BFT"/>
<dbReference type="PDBsum" id="6BGT"/>
<dbReference type="PDBsum" id="6BKB"/>
<dbReference type="PDBsum" id="6BKC"/>
<dbReference type="PDBsum" id="6BZ4"/>
<dbReference type="PDBsum" id="6DKJ"/>
<dbReference type="PDBsum" id="6EAQ"/>
<dbReference type="PDBsum" id="6FCZ"/>
<dbReference type="PDBsum" id="6FGO"/>
<dbReference type="PDBsum" id="6G1E"/>
<dbReference type="PDBsum" id="6IFJ"/>
<dbReference type="PDBsum" id="6IQG"/>
<dbReference type="PDBsum" id="6IQH"/>
<dbReference type="PDBsum" id="6KA7"/>
<dbReference type="PDBsum" id="6MB3"/>
<dbReference type="PDBsum" id="6MSY"/>
<dbReference type="PDBsum" id="6MU3"/>
<dbReference type="PDBsum" id="6MUB"/>
<dbReference type="PDBsum" id="6N2X"/>
<dbReference type="PDBsum" id="6N32"/>
<dbReference type="PDBsum" id="6N35"/>
<dbReference type="PDBsum" id="6OGE"/>
<dbReference type="PDBsum" id="6OKQ"/>
<dbReference type="PDBsum" id="6P6D"/>
<dbReference type="PDBsum" id="6UBI"/>
<dbReference type="PDBsum" id="6UGW"/>
<dbReference type="PDBsum" id="6UGX"/>
<dbReference type="PDBsum" id="6UGY"/>
<dbReference type="PDBsum" id="6UOE"/>
<dbReference type="PDBsum" id="6V8Z"/>
<dbReference type="PDBsum" id="6VSL"/>
<dbReference type="PDBsum" id="6VSZ"/>
<dbReference type="PDBsum" id="6X3I"/>
<dbReference type="PDBsum" id="6YSC"/>
<dbReference type="PDBsum" id="6YT7"/>
<dbReference type="PDBsum" id="6YTB"/>
<dbReference type="PDBsum" id="7CZT"/>
<dbReference type="PDBsum" id="7CZU"/>
<dbReference type="PDBsum" id="7CZV"/>
<dbReference type="PDBsum" id="7T17"/>
<dbReference type="PDBsum" id="7URU"/>
<dbReference type="PDBsum" id="7X13"/>
<dbReference type="PDBsum" id="7XXL"/>
<dbReference type="PDBsum" id="8A49"/>
<dbReference type="PDBsum" id="8A64"/>
<dbReference type="PDBsum" id="8DAO"/>
<dbReference type="PDBsum" id="8DBZ"/>
<dbReference type="PDBsum" id="8DV1"/>
<dbReference type="PDBsum" id="8DV2"/>
<dbReference type="PDBsum" id="8ECQ"/>
<dbReference type="PDBsum" id="8ECV"/>
<dbReference type="PDBsum" id="8ECZ"/>
<dbReference type="PDBsum" id="8ED1"/>
<dbReference type="PDBsum" id="8EDF"/>
<dbReference type="PDBsum" id="8G8D"/>
<dbReference type="PDBsum" id="8GHR"/>
<dbReference type="PDBsum" id="8Q5U"/>
<dbReference type="PDBsum" id="8SVE"/>
<dbReference type="PDBsum" id="8TQK"/>
<dbReference type="PDBsum" id="8TTM"/>
<dbReference type="PDBsum" id="8TUD"/>
<dbReference type="PDBsum" id="8URO"/>
<dbReference type="PDBsum" id="8W4L"/>
<dbReference type="PDBsum" id="8W4M"/>
<dbReference type="PDBsum" id="8ZCK"/>
<dbReference type="PDBsum" id="8ZCL"/>
<dbReference type="PDBsum" id="8ZCM"/>
<dbReference type="PDBsum" id="9IIE"/>
<dbReference type="EMDB" id="EMD-15205"/>
<dbReference type="EMDB" id="EMD-20055"/>
<dbReference type="EMDB" id="EMD-21112"/>
<dbReference type="EMDB" id="EMD-25606"/>
<dbReference type="EMDB" id="EMD-27318"/>
<dbReference type="EMDB" id="EMD-27730"/>
<dbReference type="EMDB" id="EMD-27731"/>
<dbReference type="EMDB" id="EMD-30513"/>
<dbReference type="EMDB" id="EMD-30516"/>
<dbReference type="EMDB" id="EMD-30517"/>
<dbReference type="EMDB" id="EMD-30518"/>
<dbReference type="EMDB" id="EMD-32933"/>
<dbReference type="EMDB" id="EMD-40047"/>
<dbReference type="EMDB" id="EMD-4232"/>
<dbReference type="EMDB" id="EMD-7062"/>
<dbReference type="EMDB" id="EMD-7066"/>
<dbReference type="EMDB" id="EMD-7091"/>
<dbReference type="EMDB" id="EMD-7093"/>
<dbReference type="EMDB" id="EMD-8695"/>
<dbReference type="EMDB" id="EMD-9065"/>
<dbReference type="SMR" id="P0DOX5"/>
<dbReference type="CORUM" id="P0DOX5"/>
<dbReference type="CarbonylDB" id="P0DOX5"/>
<dbReference type="GlyConnect" id="2964">
    <property type="glycosylation" value="50 N-Linked glycans"/>
</dbReference>
<dbReference type="iPTMnet" id="P0DOX5"/>
<dbReference type="PhosphoSitePlus" id="P0DOX5"/>
<dbReference type="jPOST" id="P0DOX5"/>
<dbReference type="SIGNOR" id="P0DOX5"/>
<dbReference type="EvolutionaryTrace" id="P0DOX5"/>
<dbReference type="Pharos" id="P0DOX5">
    <property type="development level" value="Tdark"/>
</dbReference>
<dbReference type="GO" id="GO:0005576">
    <property type="term" value="C:extracellular region"/>
    <property type="evidence" value="ECO:0007669"/>
    <property type="project" value="UniProtKB-SubCell"/>
</dbReference>
<dbReference type="GO" id="GO:0019814">
    <property type="term" value="C:immunoglobulin complex"/>
    <property type="evidence" value="ECO:0007669"/>
    <property type="project" value="UniProtKB-KW"/>
</dbReference>
<dbReference type="GO" id="GO:0005886">
    <property type="term" value="C:plasma membrane"/>
    <property type="evidence" value="ECO:0007669"/>
    <property type="project" value="UniProtKB-SubCell"/>
</dbReference>
<dbReference type="GO" id="GO:0002250">
    <property type="term" value="P:adaptive immune response"/>
    <property type="evidence" value="ECO:0007669"/>
    <property type="project" value="UniProtKB-KW"/>
</dbReference>
<dbReference type="CDD" id="cd21817">
    <property type="entry name" value="IgC1_CH1_IgEG"/>
    <property type="match status" value="1"/>
</dbReference>
<dbReference type="CDD" id="cd07696">
    <property type="entry name" value="IgC1_CH3_IgAEM_CH2_IgG"/>
    <property type="match status" value="1"/>
</dbReference>
<dbReference type="CDD" id="cd05768">
    <property type="entry name" value="IgC1_CH3_IgAGD_CH4_IgAEM"/>
    <property type="match status" value="1"/>
</dbReference>
<dbReference type="CDD" id="cd04981">
    <property type="entry name" value="IgV_H"/>
    <property type="match status" value="1"/>
</dbReference>
<dbReference type="FunFam" id="2.60.40.10:FF:000463">
    <property type="entry name" value="Immunoglobulin heavy constant gamma 1"/>
    <property type="match status" value="1"/>
</dbReference>
<dbReference type="FunFam" id="2.60.40.10:FF:001129">
    <property type="entry name" value="Immunoglobulin heavy constant gamma 1"/>
    <property type="match status" value="1"/>
</dbReference>
<dbReference type="FunFam" id="2.60.40.10:FF:001540">
    <property type="entry name" value="Immunoglobulin heavy constant gamma 1"/>
    <property type="match status" value="1"/>
</dbReference>
<dbReference type="FunFam" id="2.60.40.10:FF:002142">
    <property type="entry name" value="Immunoglobulin heavy variable 3-38 (non-functional)"/>
    <property type="match status" value="1"/>
</dbReference>
<dbReference type="Gene3D" id="2.60.40.10">
    <property type="entry name" value="Immunoglobulins"/>
    <property type="match status" value="4"/>
</dbReference>
<dbReference type="InterPro" id="IPR007110">
    <property type="entry name" value="Ig-like_dom"/>
</dbReference>
<dbReference type="InterPro" id="IPR036179">
    <property type="entry name" value="Ig-like_dom_sf"/>
</dbReference>
<dbReference type="InterPro" id="IPR013783">
    <property type="entry name" value="Ig-like_fold"/>
</dbReference>
<dbReference type="InterPro" id="IPR003006">
    <property type="entry name" value="Ig/MHC_CS"/>
</dbReference>
<dbReference type="InterPro" id="IPR003597">
    <property type="entry name" value="Ig_C1-set"/>
</dbReference>
<dbReference type="InterPro" id="IPR003599">
    <property type="entry name" value="Ig_sub"/>
</dbReference>
<dbReference type="InterPro" id="IPR013106">
    <property type="entry name" value="Ig_V-set"/>
</dbReference>
<dbReference type="InterPro" id="IPR050380">
    <property type="entry name" value="Immune_Resp_Modulators"/>
</dbReference>
<dbReference type="PANTHER" id="PTHR23411">
    <property type="entry name" value="TAPASIN"/>
    <property type="match status" value="1"/>
</dbReference>
<dbReference type="Pfam" id="PF07654">
    <property type="entry name" value="C1-set"/>
    <property type="match status" value="3"/>
</dbReference>
<dbReference type="Pfam" id="PF07686">
    <property type="entry name" value="V-set"/>
    <property type="match status" value="1"/>
</dbReference>
<dbReference type="SMART" id="SM00409">
    <property type="entry name" value="IG"/>
    <property type="match status" value="2"/>
</dbReference>
<dbReference type="SMART" id="SM00407">
    <property type="entry name" value="IGc1"/>
    <property type="match status" value="3"/>
</dbReference>
<dbReference type="SMART" id="SM00406">
    <property type="entry name" value="IGv"/>
    <property type="match status" value="1"/>
</dbReference>
<dbReference type="SUPFAM" id="SSF48726">
    <property type="entry name" value="Immunoglobulin"/>
    <property type="match status" value="4"/>
</dbReference>
<dbReference type="PROSITE" id="PS50835">
    <property type="entry name" value="IG_LIKE"/>
    <property type="match status" value="4"/>
</dbReference>
<dbReference type="PROSITE" id="PS00290">
    <property type="entry name" value="IG_MHC"/>
    <property type="match status" value="2"/>
</dbReference>
<organism>
    <name type="scientific">Homo sapiens</name>
    <name type="common">Human</name>
    <dbReference type="NCBI Taxonomy" id="9606"/>
    <lineage>
        <taxon>Eukaryota</taxon>
        <taxon>Metazoa</taxon>
        <taxon>Chordata</taxon>
        <taxon>Craniata</taxon>
        <taxon>Vertebrata</taxon>
        <taxon>Euteleostomi</taxon>
        <taxon>Mammalia</taxon>
        <taxon>Eutheria</taxon>
        <taxon>Euarchontoglires</taxon>
        <taxon>Primates</taxon>
        <taxon>Haplorrhini</taxon>
        <taxon>Catarrhini</taxon>
        <taxon>Hominidae</taxon>
        <taxon>Homo</taxon>
    </lineage>
</organism>
<proteinExistence type="evidence at protein level"/>
<keyword id="KW-0002">3D-structure</keyword>
<keyword id="KW-1064">Adaptive immunity</keyword>
<keyword id="KW-1003">Cell membrane</keyword>
<keyword id="KW-0903">Direct protein sequencing</keyword>
<keyword id="KW-1015">Disulfide bond</keyword>
<keyword id="KW-0325">Glycoprotein</keyword>
<keyword id="KW-0391">Immunity</keyword>
<keyword id="KW-1280">Immunoglobulin</keyword>
<keyword id="KW-0393">Immunoglobulin domain</keyword>
<keyword id="KW-0472">Membrane</keyword>
<keyword id="KW-0873">Pyrrolidone carboxylic acid</keyword>
<keyword id="KW-0677">Repeat</keyword>
<keyword id="KW-0964">Secreted</keyword>